<proteinExistence type="inferred from homology"/>
<feature type="chain" id="PRO_1000214264" description="Small ribosomal subunit protein uS8">
    <location>
        <begin position="1"/>
        <end position="132"/>
    </location>
</feature>
<organism>
    <name type="scientific">Rickettsia peacockii (strain Rustic)</name>
    <dbReference type="NCBI Taxonomy" id="562019"/>
    <lineage>
        <taxon>Bacteria</taxon>
        <taxon>Pseudomonadati</taxon>
        <taxon>Pseudomonadota</taxon>
        <taxon>Alphaproteobacteria</taxon>
        <taxon>Rickettsiales</taxon>
        <taxon>Rickettsiaceae</taxon>
        <taxon>Rickettsieae</taxon>
        <taxon>Rickettsia</taxon>
        <taxon>spotted fever group</taxon>
    </lineage>
</organism>
<keyword id="KW-0687">Ribonucleoprotein</keyword>
<keyword id="KW-0689">Ribosomal protein</keyword>
<keyword id="KW-0694">RNA-binding</keyword>
<keyword id="KW-0699">rRNA-binding</keyword>
<name>RS8_RICPU</name>
<reference key="1">
    <citation type="journal article" date="2009" name="PLoS ONE">
        <title>Genome sequence of the endosymbiont Rickettsia peacockii and comparison with virulent Rickettsia rickettsii: identification of virulence factors.</title>
        <authorList>
            <person name="Felsheim R.F."/>
            <person name="Kurtti T.J."/>
            <person name="Munderloh U.G."/>
        </authorList>
    </citation>
    <scope>NUCLEOTIDE SEQUENCE [LARGE SCALE GENOMIC DNA]</scope>
    <source>
        <strain>Rustic</strain>
    </source>
</reference>
<dbReference type="EMBL" id="CP001227">
    <property type="protein sequence ID" value="ACR47762.1"/>
    <property type="molecule type" value="Genomic_DNA"/>
</dbReference>
<dbReference type="RefSeq" id="WP_010977581.1">
    <property type="nucleotide sequence ID" value="NC_012730.1"/>
</dbReference>
<dbReference type="SMR" id="C4K2G5"/>
<dbReference type="GeneID" id="95361472"/>
<dbReference type="KEGG" id="rpk:RPR_06160"/>
<dbReference type="HOGENOM" id="CLU_098428_0_0_5"/>
<dbReference type="Proteomes" id="UP000005015">
    <property type="component" value="Chromosome"/>
</dbReference>
<dbReference type="GO" id="GO:1990904">
    <property type="term" value="C:ribonucleoprotein complex"/>
    <property type="evidence" value="ECO:0007669"/>
    <property type="project" value="UniProtKB-KW"/>
</dbReference>
<dbReference type="GO" id="GO:0005840">
    <property type="term" value="C:ribosome"/>
    <property type="evidence" value="ECO:0007669"/>
    <property type="project" value="UniProtKB-KW"/>
</dbReference>
<dbReference type="GO" id="GO:0019843">
    <property type="term" value="F:rRNA binding"/>
    <property type="evidence" value="ECO:0007669"/>
    <property type="project" value="UniProtKB-UniRule"/>
</dbReference>
<dbReference type="GO" id="GO:0003735">
    <property type="term" value="F:structural constituent of ribosome"/>
    <property type="evidence" value="ECO:0007669"/>
    <property type="project" value="InterPro"/>
</dbReference>
<dbReference type="GO" id="GO:0006412">
    <property type="term" value="P:translation"/>
    <property type="evidence" value="ECO:0007669"/>
    <property type="project" value="UniProtKB-UniRule"/>
</dbReference>
<dbReference type="FunFam" id="3.30.1370.30:FF:000002">
    <property type="entry name" value="30S ribosomal protein S8"/>
    <property type="match status" value="1"/>
</dbReference>
<dbReference type="FunFam" id="3.30.1490.10:FF:000001">
    <property type="entry name" value="30S ribosomal protein S8"/>
    <property type="match status" value="1"/>
</dbReference>
<dbReference type="Gene3D" id="3.30.1370.30">
    <property type="match status" value="1"/>
</dbReference>
<dbReference type="Gene3D" id="3.30.1490.10">
    <property type="match status" value="1"/>
</dbReference>
<dbReference type="HAMAP" id="MF_01302_B">
    <property type="entry name" value="Ribosomal_uS8_B"/>
    <property type="match status" value="1"/>
</dbReference>
<dbReference type="InterPro" id="IPR000630">
    <property type="entry name" value="Ribosomal_uS8"/>
</dbReference>
<dbReference type="InterPro" id="IPR047863">
    <property type="entry name" value="Ribosomal_uS8_CS"/>
</dbReference>
<dbReference type="InterPro" id="IPR035987">
    <property type="entry name" value="Ribosomal_uS8_sf"/>
</dbReference>
<dbReference type="NCBIfam" id="NF001109">
    <property type="entry name" value="PRK00136.1"/>
    <property type="match status" value="1"/>
</dbReference>
<dbReference type="PANTHER" id="PTHR11758">
    <property type="entry name" value="40S RIBOSOMAL PROTEIN S15A"/>
    <property type="match status" value="1"/>
</dbReference>
<dbReference type="Pfam" id="PF00410">
    <property type="entry name" value="Ribosomal_S8"/>
    <property type="match status" value="1"/>
</dbReference>
<dbReference type="SUPFAM" id="SSF56047">
    <property type="entry name" value="Ribosomal protein S8"/>
    <property type="match status" value="1"/>
</dbReference>
<dbReference type="PROSITE" id="PS00053">
    <property type="entry name" value="RIBOSOMAL_S8"/>
    <property type="match status" value="1"/>
</dbReference>
<comment type="function">
    <text evidence="1">One of the primary rRNA binding proteins, it binds directly to 16S rRNA central domain where it helps coordinate assembly of the platform of the 30S subunit.</text>
</comment>
<comment type="subunit">
    <text evidence="1">Part of the 30S ribosomal subunit. Contacts proteins S5 and S12.</text>
</comment>
<comment type="similarity">
    <text evidence="1">Belongs to the universal ribosomal protein uS8 family.</text>
</comment>
<protein>
    <recommendedName>
        <fullName evidence="1">Small ribosomal subunit protein uS8</fullName>
    </recommendedName>
    <alternativeName>
        <fullName evidence="2">30S ribosomal protein S8</fullName>
    </alternativeName>
</protein>
<gene>
    <name evidence="1" type="primary">rpsH</name>
    <name type="ordered locus">RPR_06160</name>
</gene>
<evidence type="ECO:0000255" key="1">
    <source>
        <dbReference type="HAMAP-Rule" id="MF_01302"/>
    </source>
</evidence>
<evidence type="ECO:0000305" key="2"/>
<accession>C4K2G5</accession>
<sequence>MSMTDNVADMLTRIRNAYKSKLINVSFPSSKIKTSILDVLQKEGYIKDYITTQKNNISYTEVALKYSVNGDASICEIHRVSKPGKRVYSAIKDLKGYYNNMGIYILSTPYGVMSDREAHIKNVGGEVICKVF</sequence>